<gene>
    <name evidence="1" type="primary">yaaA</name>
    <name type="ordered locus">ECSE_0006</name>
</gene>
<organism>
    <name type="scientific">Escherichia coli (strain SE11)</name>
    <dbReference type="NCBI Taxonomy" id="409438"/>
    <lineage>
        <taxon>Bacteria</taxon>
        <taxon>Pseudomonadati</taxon>
        <taxon>Pseudomonadota</taxon>
        <taxon>Gammaproteobacteria</taxon>
        <taxon>Enterobacterales</taxon>
        <taxon>Enterobacteriaceae</taxon>
        <taxon>Escherichia</taxon>
    </lineage>
</organism>
<protein>
    <recommendedName>
        <fullName evidence="1">UPF0246 protein YaaA</fullName>
    </recommendedName>
</protein>
<proteinExistence type="inferred from homology"/>
<comment type="similarity">
    <text evidence="1">Belongs to the UPF0246 family.</text>
</comment>
<accession>B6HZ03</accession>
<sequence>MLILISPAKTLDYQSPLTTTRYTLPELLDNSQQLIHEARKLTPPQISTLMRISDKLAGINAARFHDWQRDFTPENARQAILAFKGDVYTGLQAETFSEDDFDFAQQHLRMLSGLYGVLRPLDLMQPYRLEMGIRLENARGKDLYQFWGDIITNKLNEALAAQGDNVVINLASDEYFKSVKPKKLNAEIIKPVFLDEKNGKFKIISFYAKKARGLMSRFIIENRLTKPEQLTGFNSEGYFFDEDSSSNGELVFKRYEQR</sequence>
<evidence type="ECO:0000255" key="1">
    <source>
        <dbReference type="HAMAP-Rule" id="MF_00652"/>
    </source>
</evidence>
<dbReference type="EMBL" id="AP009240">
    <property type="protein sequence ID" value="BAG75530.1"/>
    <property type="molecule type" value="Genomic_DNA"/>
</dbReference>
<dbReference type="RefSeq" id="WP_000906211.1">
    <property type="nucleotide sequence ID" value="NC_011415.1"/>
</dbReference>
<dbReference type="SMR" id="B6HZ03"/>
<dbReference type="KEGG" id="ecy:ECSE_0006"/>
<dbReference type="HOGENOM" id="CLU_061989_0_0_6"/>
<dbReference type="Proteomes" id="UP000008199">
    <property type="component" value="Chromosome"/>
</dbReference>
<dbReference type="GO" id="GO:0005829">
    <property type="term" value="C:cytosol"/>
    <property type="evidence" value="ECO:0007669"/>
    <property type="project" value="TreeGrafter"/>
</dbReference>
<dbReference type="GO" id="GO:0033194">
    <property type="term" value="P:response to hydroperoxide"/>
    <property type="evidence" value="ECO:0007669"/>
    <property type="project" value="TreeGrafter"/>
</dbReference>
<dbReference type="HAMAP" id="MF_00652">
    <property type="entry name" value="UPF0246"/>
    <property type="match status" value="1"/>
</dbReference>
<dbReference type="InterPro" id="IPR005583">
    <property type="entry name" value="YaaA"/>
</dbReference>
<dbReference type="NCBIfam" id="NF002541">
    <property type="entry name" value="PRK02101.1-1"/>
    <property type="match status" value="1"/>
</dbReference>
<dbReference type="NCBIfam" id="NF002542">
    <property type="entry name" value="PRK02101.1-3"/>
    <property type="match status" value="1"/>
</dbReference>
<dbReference type="PANTHER" id="PTHR30283:SF4">
    <property type="entry name" value="PEROXIDE STRESS RESISTANCE PROTEIN YAAA"/>
    <property type="match status" value="1"/>
</dbReference>
<dbReference type="PANTHER" id="PTHR30283">
    <property type="entry name" value="PEROXIDE STRESS RESPONSE PROTEIN YAAA"/>
    <property type="match status" value="1"/>
</dbReference>
<dbReference type="Pfam" id="PF03883">
    <property type="entry name" value="H2O2_YaaD"/>
    <property type="match status" value="1"/>
</dbReference>
<feature type="chain" id="PRO_1000131117" description="UPF0246 protein YaaA">
    <location>
        <begin position="1"/>
        <end position="258"/>
    </location>
</feature>
<name>YAAA_ECOSE</name>
<reference key="1">
    <citation type="journal article" date="2008" name="DNA Res.">
        <title>Complete genome sequence and comparative analysis of the wild-type commensal Escherichia coli strain SE11 isolated from a healthy adult.</title>
        <authorList>
            <person name="Oshima K."/>
            <person name="Toh H."/>
            <person name="Ogura Y."/>
            <person name="Sasamoto H."/>
            <person name="Morita H."/>
            <person name="Park S.-H."/>
            <person name="Ooka T."/>
            <person name="Iyoda S."/>
            <person name="Taylor T.D."/>
            <person name="Hayashi T."/>
            <person name="Itoh K."/>
            <person name="Hattori M."/>
        </authorList>
    </citation>
    <scope>NUCLEOTIDE SEQUENCE [LARGE SCALE GENOMIC DNA]</scope>
    <source>
        <strain>SE11</strain>
    </source>
</reference>